<dbReference type="EMBL" id="Y18930">
    <property type="protein sequence ID" value="CAB57551.1"/>
    <property type="molecule type" value="Genomic_DNA"/>
</dbReference>
<dbReference type="EMBL" id="AE006641">
    <property type="protein sequence ID" value="AAK41047.1"/>
    <property type="molecule type" value="Genomic_DNA"/>
</dbReference>
<dbReference type="PIR" id="H90223">
    <property type="entry name" value="H90223"/>
</dbReference>
<dbReference type="RefSeq" id="WP_009991331.1">
    <property type="nucleotide sequence ID" value="NC_002754.1"/>
</dbReference>
<dbReference type="SMR" id="Q9UXE0"/>
<dbReference type="FunCoup" id="Q9UXE0">
    <property type="interactions" value="220"/>
</dbReference>
<dbReference type="STRING" id="273057.SSO0752"/>
<dbReference type="PaxDb" id="273057-SSO0752"/>
<dbReference type="EnsemblBacteria" id="AAK41047">
    <property type="protein sequence ID" value="AAK41047"/>
    <property type="gene ID" value="SSO0752"/>
</dbReference>
<dbReference type="KEGG" id="sso:SSO0752"/>
<dbReference type="PATRIC" id="fig|273057.12.peg.747"/>
<dbReference type="eggNOG" id="arCOG04129">
    <property type="taxonomic scope" value="Archaea"/>
</dbReference>
<dbReference type="HOGENOM" id="CLU_103610_1_1_2"/>
<dbReference type="InParanoid" id="Q9UXE0"/>
<dbReference type="PhylomeDB" id="Q9UXE0"/>
<dbReference type="Proteomes" id="UP000001974">
    <property type="component" value="Chromosome"/>
</dbReference>
<dbReference type="GO" id="GO:0022625">
    <property type="term" value="C:cytosolic large ribosomal subunit"/>
    <property type="evidence" value="ECO:0000318"/>
    <property type="project" value="GO_Central"/>
</dbReference>
<dbReference type="GO" id="GO:0003735">
    <property type="term" value="F:structural constituent of ribosome"/>
    <property type="evidence" value="ECO:0000318"/>
    <property type="project" value="GO_Central"/>
</dbReference>
<dbReference type="GO" id="GO:0006412">
    <property type="term" value="P:translation"/>
    <property type="evidence" value="ECO:0007669"/>
    <property type="project" value="UniProtKB-UniRule"/>
</dbReference>
<dbReference type="FunFam" id="2.30.30.70:FF:000001">
    <property type="entry name" value="60S ribosomal protein L21"/>
    <property type="match status" value="1"/>
</dbReference>
<dbReference type="Gene3D" id="2.30.30.70">
    <property type="entry name" value="Ribosomal protein L21"/>
    <property type="match status" value="1"/>
</dbReference>
<dbReference type="HAMAP" id="MF_00369">
    <property type="entry name" value="Ribosomal_eL21"/>
    <property type="match status" value="1"/>
</dbReference>
<dbReference type="InterPro" id="IPR001147">
    <property type="entry name" value="Ribosomal_eL21"/>
</dbReference>
<dbReference type="InterPro" id="IPR022856">
    <property type="entry name" value="Ribosomal_eL21_arc"/>
</dbReference>
<dbReference type="InterPro" id="IPR018259">
    <property type="entry name" value="Ribosomal_eL21_CS"/>
</dbReference>
<dbReference type="InterPro" id="IPR036948">
    <property type="entry name" value="Ribosomal_eL21_sf"/>
</dbReference>
<dbReference type="InterPro" id="IPR008991">
    <property type="entry name" value="Translation_prot_SH3-like_sf"/>
</dbReference>
<dbReference type="NCBIfam" id="NF003303">
    <property type="entry name" value="PRK04306.1"/>
    <property type="match status" value="1"/>
</dbReference>
<dbReference type="PANTHER" id="PTHR20981">
    <property type="entry name" value="60S RIBOSOMAL PROTEIN L21"/>
    <property type="match status" value="1"/>
</dbReference>
<dbReference type="Pfam" id="PF01157">
    <property type="entry name" value="Ribosomal_L21e"/>
    <property type="match status" value="1"/>
</dbReference>
<dbReference type="SUPFAM" id="SSF50104">
    <property type="entry name" value="Translation proteins SH3-like domain"/>
    <property type="match status" value="1"/>
</dbReference>
<dbReference type="PROSITE" id="PS01171">
    <property type="entry name" value="RIBOSOMAL_L21E"/>
    <property type="match status" value="1"/>
</dbReference>
<gene>
    <name type="primary">rpl21e</name>
    <name type="ordered locus">SSO0752</name>
</gene>
<proteinExistence type="inferred from homology"/>
<evidence type="ECO:0000256" key="1">
    <source>
        <dbReference type="SAM" id="MobiDB-lite"/>
    </source>
</evidence>
<evidence type="ECO:0000305" key="2"/>
<feature type="chain" id="PRO_0000149702" description="Large ribosomal subunit protein eL21">
    <location>
        <begin position="1"/>
        <end position="101"/>
    </location>
</feature>
<feature type="region of interest" description="Disordered" evidence="1">
    <location>
        <begin position="1"/>
        <end position="24"/>
    </location>
</feature>
<feature type="compositionally biased region" description="Basic residues" evidence="1">
    <location>
        <begin position="1"/>
        <end position="18"/>
    </location>
</feature>
<sequence>MVKHSKGYRTRSRSLLRKSPRERGAVPSLSKLMVEYKEGDNVVVKINPSVHQGMPHRRYQGKVGKIIGKRGRAYLVSVTLGDKEKVIIVRPEHLVPFNSSG</sequence>
<keyword id="KW-1185">Reference proteome</keyword>
<keyword id="KW-0687">Ribonucleoprotein</keyword>
<keyword id="KW-0689">Ribosomal protein</keyword>
<accession>Q9UXE0</accession>
<protein>
    <recommendedName>
        <fullName evidence="2">Large ribosomal subunit protein eL21</fullName>
    </recommendedName>
    <alternativeName>
        <fullName>50S ribosomal protein L21e</fullName>
    </alternativeName>
</protein>
<name>RL21_SACS2</name>
<comment type="similarity">
    <text evidence="2">Belongs to the eukaryotic ribosomal protein eL21 family.</text>
</comment>
<organism>
    <name type="scientific">Saccharolobus solfataricus (strain ATCC 35092 / DSM 1617 / JCM 11322 / P2)</name>
    <name type="common">Sulfolobus solfataricus</name>
    <dbReference type="NCBI Taxonomy" id="273057"/>
    <lineage>
        <taxon>Archaea</taxon>
        <taxon>Thermoproteota</taxon>
        <taxon>Thermoprotei</taxon>
        <taxon>Sulfolobales</taxon>
        <taxon>Sulfolobaceae</taxon>
        <taxon>Saccharolobus</taxon>
    </lineage>
</organism>
<reference key="1">
    <citation type="journal article" date="2000" name="Genome">
        <title>Gene content and organization of a 281-kbp contig from the genome of the extremely thermophilic archaeon, Sulfolobus solfataricus P2.</title>
        <authorList>
            <person name="Charlebois R.L."/>
            <person name="Singh R.K."/>
            <person name="Chan-Weiher C.C.-Y."/>
            <person name="Allard G."/>
            <person name="Chow C."/>
            <person name="Confalonieri F."/>
            <person name="Curtis B."/>
            <person name="Duguet M."/>
            <person name="Erauso G."/>
            <person name="Faguy D."/>
            <person name="Gaasterland T."/>
            <person name="Garrett R.A."/>
            <person name="Gordon P."/>
            <person name="Jeffries A.C."/>
            <person name="Kozera C."/>
            <person name="Kushwaha N."/>
            <person name="Lafleur E."/>
            <person name="Medina N."/>
            <person name="Peng X."/>
            <person name="Penny S.L."/>
            <person name="She Q."/>
            <person name="St Jean A."/>
            <person name="van der Oost J."/>
            <person name="Young F."/>
            <person name="Zivanovic Y."/>
            <person name="Doolittle W.F."/>
            <person name="Ragan M.A."/>
            <person name="Sensen C.W."/>
        </authorList>
    </citation>
    <scope>NUCLEOTIDE SEQUENCE [LARGE SCALE GENOMIC DNA]</scope>
    <source>
        <strain>ATCC 35092 / DSM 1617 / JCM 11322 / P2</strain>
    </source>
</reference>
<reference key="2">
    <citation type="journal article" date="2001" name="Proc. Natl. Acad. Sci. U.S.A.">
        <title>The complete genome of the crenarchaeon Sulfolobus solfataricus P2.</title>
        <authorList>
            <person name="She Q."/>
            <person name="Singh R.K."/>
            <person name="Confalonieri F."/>
            <person name="Zivanovic Y."/>
            <person name="Allard G."/>
            <person name="Awayez M.J."/>
            <person name="Chan-Weiher C.C.-Y."/>
            <person name="Clausen I.G."/>
            <person name="Curtis B.A."/>
            <person name="De Moors A."/>
            <person name="Erauso G."/>
            <person name="Fletcher C."/>
            <person name="Gordon P.M.K."/>
            <person name="Heikamp-de Jong I."/>
            <person name="Jeffries A.C."/>
            <person name="Kozera C.J."/>
            <person name="Medina N."/>
            <person name="Peng X."/>
            <person name="Thi-Ngoc H.P."/>
            <person name="Redder P."/>
            <person name="Schenk M.E."/>
            <person name="Theriault C."/>
            <person name="Tolstrup N."/>
            <person name="Charlebois R.L."/>
            <person name="Doolittle W.F."/>
            <person name="Duguet M."/>
            <person name="Gaasterland T."/>
            <person name="Garrett R.A."/>
            <person name="Ragan M.A."/>
            <person name="Sensen C.W."/>
            <person name="Van der Oost J."/>
        </authorList>
    </citation>
    <scope>NUCLEOTIDE SEQUENCE [LARGE SCALE GENOMIC DNA]</scope>
    <source>
        <strain>ATCC 35092 / DSM 1617 / JCM 11322 / P2</strain>
    </source>
</reference>